<name>Y441_CHLPN</name>
<proteinExistence type="inferred from homology"/>
<protein>
    <recommendedName>
        <fullName>Uncharacterized protein CPn_0441/CP_0312/CPj0441/CpB0457</fullName>
    </recommendedName>
</protein>
<dbReference type="EMBL" id="AE001363">
    <property type="protein sequence ID" value="AAD18585.1"/>
    <property type="molecule type" value="Genomic_DNA"/>
</dbReference>
<dbReference type="EMBL" id="AE002161">
    <property type="protein sequence ID" value="AAF73653.1"/>
    <property type="molecule type" value="Genomic_DNA"/>
</dbReference>
<dbReference type="EMBL" id="BA000008">
    <property type="protein sequence ID" value="BAA98649.1"/>
    <property type="molecule type" value="Genomic_DNA"/>
</dbReference>
<dbReference type="EMBL" id="AE009440">
    <property type="protein sequence ID" value="AAP98388.1"/>
    <property type="molecule type" value="Genomic_DNA"/>
</dbReference>
<dbReference type="PIR" id="G72077">
    <property type="entry name" value="G72077"/>
</dbReference>
<dbReference type="PIR" id="G86545">
    <property type="entry name" value="G86545"/>
</dbReference>
<dbReference type="RefSeq" id="NP_224641.1">
    <property type="nucleotide sequence ID" value="NC_000922.1"/>
</dbReference>
<dbReference type="RefSeq" id="WP_010883084.1">
    <property type="nucleotide sequence ID" value="NZ_LN847257.1"/>
</dbReference>
<dbReference type="RefSeq" id="WP_010892033.1">
    <property type="nucleotide sequence ID" value="NZ_LN846995.1"/>
</dbReference>
<dbReference type="STRING" id="406984.CPK_ORF00953"/>
<dbReference type="GeneID" id="45050488"/>
<dbReference type="KEGG" id="cpa:CP_0312"/>
<dbReference type="KEGG" id="cpj:CPj0441"/>
<dbReference type="KEGG" id="cpn:CPn_0441"/>
<dbReference type="KEGG" id="cpt:CpB0457"/>
<dbReference type="PATRIC" id="fig|115713.3.peg.488"/>
<dbReference type="HOGENOM" id="CLU_902237_0_0_0"/>
<dbReference type="OrthoDB" id="18429at2"/>
<dbReference type="Proteomes" id="UP000000583">
    <property type="component" value="Chromosome"/>
</dbReference>
<dbReference type="Proteomes" id="UP000000801">
    <property type="component" value="Chromosome"/>
</dbReference>
<feature type="chain" id="PRO_0000218380" description="Uncharacterized protein CPn_0441/CP_0312/CPj0441/CpB0457">
    <location>
        <begin position="1"/>
        <end position="316"/>
    </location>
</feature>
<feature type="sequence variant" description="In strain: CWL029 and TW-183.">
    <original>Y</original>
    <variation>H</variation>
    <location>
        <position position="243"/>
    </location>
</feature>
<gene>
    <name type="ordered locus">CPn_0441</name>
    <name type="ordered locus">CP_0312</name>
    <name type="ordered locus">CPj0441</name>
    <name type="ordered locus">CpB0457</name>
</gene>
<comment type="similarity">
    <text evidence="1">Belongs to the chlamydial CPn_0441/CT_007/TC_0275 family.</text>
</comment>
<sequence>MFKLLFHIAAFAGHVLSTPIFIVQDACGIDEEACKNPPPRPFSAQVQYLKVNDAKFKKLPHQTIGYRQYDGTFLCTLPITEHSGLLFSTGYIGADIQWKSSLPISETDPNGLGWATFQDTSFYNYVLLSLGAYTLSLKNWQWSIILSGLVDPKNIEMGYGLYQGVLSGKYQATEKLSAIFGVINETGLHQEKAWPLVGVSYKATDQLTLNCIYPVNFSIDYRSTSVCNLGLAYRLTRFRKKLYKNHLISSRGIFEYQGREIEANVKLTPWPGSFIKGFYGWSIGNDISIADDHNNNKTSHTFKTSAFFGGSAVMNF</sequence>
<organism>
    <name type="scientific">Chlamydia pneumoniae</name>
    <name type="common">Chlamydophila pneumoniae</name>
    <dbReference type="NCBI Taxonomy" id="83558"/>
    <lineage>
        <taxon>Bacteria</taxon>
        <taxon>Pseudomonadati</taxon>
        <taxon>Chlamydiota</taxon>
        <taxon>Chlamydiia</taxon>
        <taxon>Chlamydiales</taxon>
        <taxon>Chlamydiaceae</taxon>
        <taxon>Chlamydia/Chlamydophila group</taxon>
        <taxon>Chlamydia</taxon>
    </lineage>
</organism>
<reference key="1">
    <citation type="journal article" date="1999" name="Nat. Genet.">
        <title>Comparative genomes of Chlamydia pneumoniae and C. trachomatis.</title>
        <authorList>
            <person name="Kalman S."/>
            <person name="Mitchell W.P."/>
            <person name="Marathe R."/>
            <person name="Lammel C.J."/>
            <person name="Fan J."/>
            <person name="Hyman R.W."/>
            <person name="Olinger L."/>
            <person name="Grimwood J."/>
            <person name="Davis R.W."/>
            <person name="Stephens R.S."/>
        </authorList>
    </citation>
    <scope>NUCLEOTIDE SEQUENCE [LARGE SCALE GENOMIC DNA]</scope>
    <source>
        <strain>CWL029</strain>
    </source>
</reference>
<reference key="2">
    <citation type="journal article" date="2000" name="Nucleic Acids Res.">
        <title>Genome sequences of Chlamydia trachomatis MoPn and Chlamydia pneumoniae AR39.</title>
        <authorList>
            <person name="Read T.D."/>
            <person name="Brunham R.C."/>
            <person name="Shen C."/>
            <person name="Gill S.R."/>
            <person name="Heidelberg J.F."/>
            <person name="White O."/>
            <person name="Hickey E.K."/>
            <person name="Peterson J.D."/>
            <person name="Utterback T.R."/>
            <person name="Berry K.J."/>
            <person name="Bass S."/>
            <person name="Linher K.D."/>
            <person name="Weidman J.F."/>
            <person name="Khouri H.M."/>
            <person name="Craven B."/>
            <person name="Bowman C."/>
            <person name="Dodson R.J."/>
            <person name="Gwinn M.L."/>
            <person name="Nelson W.C."/>
            <person name="DeBoy R.T."/>
            <person name="Kolonay J.F."/>
            <person name="McClarty G."/>
            <person name="Salzberg S.L."/>
            <person name="Eisen J.A."/>
            <person name="Fraser C.M."/>
        </authorList>
    </citation>
    <scope>NUCLEOTIDE SEQUENCE [LARGE SCALE GENOMIC DNA]</scope>
    <source>
        <strain>AR39</strain>
    </source>
</reference>
<reference key="3">
    <citation type="journal article" date="2000" name="Nucleic Acids Res.">
        <title>Comparison of whole genome sequences of Chlamydia pneumoniae J138 from Japan and CWL029 from USA.</title>
        <authorList>
            <person name="Shirai M."/>
            <person name="Hirakawa H."/>
            <person name="Kimoto M."/>
            <person name="Tabuchi M."/>
            <person name="Kishi F."/>
            <person name="Ouchi K."/>
            <person name="Shiba T."/>
            <person name="Ishii K."/>
            <person name="Hattori M."/>
            <person name="Kuhara S."/>
            <person name="Nakazawa T."/>
        </authorList>
    </citation>
    <scope>NUCLEOTIDE SEQUENCE [LARGE SCALE GENOMIC DNA]</scope>
    <source>
        <strain>J138</strain>
    </source>
</reference>
<reference key="4">
    <citation type="submission" date="2002-05" db="EMBL/GenBank/DDBJ databases">
        <title>The genome sequence of Chlamydia pneumoniae TW183 and comparison with other Chlamydia strains based on whole genome sequence analysis.</title>
        <authorList>
            <person name="Geng M.M."/>
            <person name="Schuhmacher A."/>
            <person name="Muehldorfer I."/>
            <person name="Bensch K.W."/>
            <person name="Schaefer K.P."/>
            <person name="Schneider S."/>
            <person name="Pohl T."/>
            <person name="Essig A."/>
            <person name="Marre R."/>
            <person name="Melchers K."/>
        </authorList>
    </citation>
    <scope>NUCLEOTIDE SEQUENCE [LARGE SCALE GENOMIC DNA]</scope>
    <source>
        <strain>TW-183</strain>
    </source>
</reference>
<evidence type="ECO:0000305" key="1"/>
<accession>Q9Z8A2</accession>
<accession>Q9JRW4</accession>